<comment type="function">
    <text evidence="1">Catalyzes a salvage reaction resulting in the formation of AMP, that is energically less costly than de novo synthesis.</text>
</comment>
<comment type="catalytic activity">
    <reaction evidence="1">
        <text>AMP + diphosphate = 5-phospho-alpha-D-ribose 1-diphosphate + adenine</text>
        <dbReference type="Rhea" id="RHEA:16609"/>
        <dbReference type="ChEBI" id="CHEBI:16708"/>
        <dbReference type="ChEBI" id="CHEBI:33019"/>
        <dbReference type="ChEBI" id="CHEBI:58017"/>
        <dbReference type="ChEBI" id="CHEBI:456215"/>
        <dbReference type="EC" id="2.4.2.7"/>
    </reaction>
</comment>
<comment type="pathway">
    <text evidence="1">Purine metabolism; AMP biosynthesis via salvage pathway; AMP from adenine: step 1/1.</text>
</comment>
<comment type="subunit">
    <text evidence="1">Homodimer.</text>
</comment>
<comment type="subcellular location">
    <subcellularLocation>
        <location evidence="1">Cytoplasm</location>
    </subcellularLocation>
</comment>
<comment type="similarity">
    <text evidence="1">Belongs to the purine/pyrimidine phosphoribosyltransferase family.</text>
</comment>
<organism>
    <name type="scientific">Streptococcus suis (strain 98HAH33)</name>
    <dbReference type="NCBI Taxonomy" id="391296"/>
    <lineage>
        <taxon>Bacteria</taxon>
        <taxon>Bacillati</taxon>
        <taxon>Bacillota</taxon>
        <taxon>Bacilli</taxon>
        <taxon>Lactobacillales</taxon>
        <taxon>Streptococcaceae</taxon>
        <taxon>Streptococcus</taxon>
    </lineage>
</organism>
<reference key="1">
    <citation type="journal article" date="2007" name="PLoS ONE">
        <title>A glimpse of streptococcal toxic shock syndrome from comparative genomics of S. suis 2 Chinese isolates.</title>
        <authorList>
            <person name="Chen C."/>
            <person name="Tang J."/>
            <person name="Dong W."/>
            <person name="Wang C."/>
            <person name="Feng Y."/>
            <person name="Wang J."/>
            <person name="Zheng F."/>
            <person name="Pan X."/>
            <person name="Liu D."/>
            <person name="Li M."/>
            <person name="Song Y."/>
            <person name="Zhu X."/>
            <person name="Sun H."/>
            <person name="Feng T."/>
            <person name="Guo Z."/>
            <person name="Ju A."/>
            <person name="Ge J."/>
            <person name="Dong Y."/>
            <person name="Sun W."/>
            <person name="Jiang Y."/>
            <person name="Wang J."/>
            <person name="Yan J."/>
            <person name="Yang H."/>
            <person name="Wang X."/>
            <person name="Gao G.F."/>
            <person name="Yang R."/>
            <person name="Wang J."/>
            <person name="Yu J."/>
        </authorList>
    </citation>
    <scope>NUCLEOTIDE SEQUENCE [LARGE SCALE GENOMIC DNA]</scope>
    <source>
        <strain>98HAH33</strain>
    </source>
</reference>
<feature type="chain" id="PRO_1000000358" description="Adenine phosphoribosyltransferase">
    <location>
        <begin position="1"/>
        <end position="170"/>
    </location>
</feature>
<accession>A4W292</accession>
<keyword id="KW-0963">Cytoplasm</keyword>
<keyword id="KW-0328">Glycosyltransferase</keyword>
<keyword id="KW-0660">Purine salvage</keyword>
<keyword id="KW-0808">Transferase</keyword>
<evidence type="ECO:0000255" key="1">
    <source>
        <dbReference type="HAMAP-Rule" id="MF_00004"/>
    </source>
</evidence>
<proteinExistence type="inferred from homology"/>
<sequence>MNLKDYIATIPNYPKEGIEFRDISPLMADGNAYSYAVREIVQYATDKQIDMIVGPEARGFIVGCPVAFELGIGFAPVRKPGKLPREVISADYEKEYGVDTLTMHADAIKPGQRVLIVDDLLATGGTVKATIEMIEKLGGIVAGCAFLIELDDLKGREAIGDYDYKVLMHY</sequence>
<name>APT_STRS2</name>
<gene>
    <name evidence="1" type="primary">apt</name>
    <name type="ordered locus">SSU98_1323</name>
</gene>
<protein>
    <recommendedName>
        <fullName evidence="1">Adenine phosphoribosyltransferase</fullName>
        <shortName evidence="1">APRT</shortName>
        <ecNumber evidence="1">2.4.2.7</ecNumber>
    </recommendedName>
</protein>
<dbReference type="EC" id="2.4.2.7" evidence="1"/>
<dbReference type="EMBL" id="CP000408">
    <property type="protein sequence ID" value="ABP92481.1"/>
    <property type="molecule type" value="Genomic_DNA"/>
</dbReference>
<dbReference type="SMR" id="A4W292"/>
<dbReference type="KEGG" id="ssv:SSU98_1323"/>
<dbReference type="HOGENOM" id="CLU_063339_3_0_9"/>
<dbReference type="UniPathway" id="UPA00588">
    <property type="reaction ID" value="UER00646"/>
</dbReference>
<dbReference type="GO" id="GO:0005737">
    <property type="term" value="C:cytoplasm"/>
    <property type="evidence" value="ECO:0007669"/>
    <property type="project" value="UniProtKB-SubCell"/>
</dbReference>
<dbReference type="GO" id="GO:0002055">
    <property type="term" value="F:adenine binding"/>
    <property type="evidence" value="ECO:0007669"/>
    <property type="project" value="TreeGrafter"/>
</dbReference>
<dbReference type="GO" id="GO:0003999">
    <property type="term" value="F:adenine phosphoribosyltransferase activity"/>
    <property type="evidence" value="ECO:0007669"/>
    <property type="project" value="UniProtKB-UniRule"/>
</dbReference>
<dbReference type="GO" id="GO:0016208">
    <property type="term" value="F:AMP binding"/>
    <property type="evidence" value="ECO:0007669"/>
    <property type="project" value="TreeGrafter"/>
</dbReference>
<dbReference type="GO" id="GO:0006168">
    <property type="term" value="P:adenine salvage"/>
    <property type="evidence" value="ECO:0007669"/>
    <property type="project" value="InterPro"/>
</dbReference>
<dbReference type="GO" id="GO:0044209">
    <property type="term" value="P:AMP salvage"/>
    <property type="evidence" value="ECO:0007669"/>
    <property type="project" value="UniProtKB-UniRule"/>
</dbReference>
<dbReference type="GO" id="GO:0006166">
    <property type="term" value="P:purine ribonucleoside salvage"/>
    <property type="evidence" value="ECO:0007669"/>
    <property type="project" value="UniProtKB-KW"/>
</dbReference>
<dbReference type="CDD" id="cd06223">
    <property type="entry name" value="PRTases_typeI"/>
    <property type="match status" value="1"/>
</dbReference>
<dbReference type="FunFam" id="3.40.50.2020:FF:000004">
    <property type="entry name" value="Adenine phosphoribosyltransferase"/>
    <property type="match status" value="1"/>
</dbReference>
<dbReference type="Gene3D" id="3.40.50.2020">
    <property type="match status" value="1"/>
</dbReference>
<dbReference type="HAMAP" id="MF_00004">
    <property type="entry name" value="Aden_phosphoribosyltr"/>
    <property type="match status" value="1"/>
</dbReference>
<dbReference type="InterPro" id="IPR005764">
    <property type="entry name" value="Ade_phspho_trans"/>
</dbReference>
<dbReference type="InterPro" id="IPR000836">
    <property type="entry name" value="PRibTrfase_dom"/>
</dbReference>
<dbReference type="InterPro" id="IPR029057">
    <property type="entry name" value="PRTase-like"/>
</dbReference>
<dbReference type="InterPro" id="IPR050054">
    <property type="entry name" value="UPRTase/APRTase"/>
</dbReference>
<dbReference type="NCBIfam" id="TIGR01090">
    <property type="entry name" value="apt"/>
    <property type="match status" value="1"/>
</dbReference>
<dbReference type="NCBIfam" id="NF002633">
    <property type="entry name" value="PRK02304.1-2"/>
    <property type="match status" value="1"/>
</dbReference>
<dbReference type="NCBIfam" id="NF002634">
    <property type="entry name" value="PRK02304.1-3"/>
    <property type="match status" value="1"/>
</dbReference>
<dbReference type="NCBIfam" id="NF002636">
    <property type="entry name" value="PRK02304.1-5"/>
    <property type="match status" value="1"/>
</dbReference>
<dbReference type="PANTHER" id="PTHR32315">
    <property type="entry name" value="ADENINE PHOSPHORIBOSYLTRANSFERASE"/>
    <property type="match status" value="1"/>
</dbReference>
<dbReference type="PANTHER" id="PTHR32315:SF3">
    <property type="entry name" value="ADENINE PHOSPHORIBOSYLTRANSFERASE"/>
    <property type="match status" value="1"/>
</dbReference>
<dbReference type="Pfam" id="PF00156">
    <property type="entry name" value="Pribosyltran"/>
    <property type="match status" value="1"/>
</dbReference>
<dbReference type="SUPFAM" id="SSF53271">
    <property type="entry name" value="PRTase-like"/>
    <property type="match status" value="1"/>
</dbReference>
<dbReference type="PROSITE" id="PS00103">
    <property type="entry name" value="PUR_PYR_PR_TRANSFER"/>
    <property type="match status" value="1"/>
</dbReference>